<organism>
    <name type="scientific">Homo sapiens</name>
    <name type="common">Human</name>
    <dbReference type="NCBI Taxonomy" id="9606"/>
    <lineage>
        <taxon>Eukaryota</taxon>
        <taxon>Metazoa</taxon>
        <taxon>Chordata</taxon>
        <taxon>Craniata</taxon>
        <taxon>Vertebrata</taxon>
        <taxon>Euteleostomi</taxon>
        <taxon>Mammalia</taxon>
        <taxon>Eutheria</taxon>
        <taxon>Euarchontoglires</taxon>
        <taxon>Primates</taxon>
        <taxon>Haplorrhini</taxon>
        <taxon>Catarrhini</taxon>
        <taxon>Hominidae</taxon>
        <taxon>Homo</taxon>
    </lineage>
</organism>
<accession>P01135</accession>
<accession>A8K286</accession>
<accession>Q15577</accession>
<accession>Q53SK7</accession>
<accession>Q9BS56</accession>
<accession>Q9UEI3</accession>
<accession>Q9UKM1</accession>
<accession>Q9UKM2</accession>
<accession>Q9UKM3</accession>
<sequence length="160" mass="17006">MVPSAGQLALFALGIVLAACQALENSTSPLSADPPVAAAVVSHFNDCPDSHTQFCFHGTCRFLVQEDKPACVCHSGYVGARCEHADLLAVVAASQKKQAITALVVVSIVALAVLIITCVLIHCCQVRKHCEWCRALICRHEKPSALLKGRTACCHSETVV</sequence>
<reference key="1">
    <citation type="journal article" date="1984" name="Cell">
        <title>Human transforming growth factor-alpha: precursor structure and expression in E. coli.</title>
        <authorList>
            <person name="Derynck R."/>
            <person name="Roberts A.B."/>
            <person name="Winkler M.E."/>
            <person name="Chen E.Y."/>
            <person name="Goeddel D.V."/>
        </authorList>
    </citation>
    <scope>NUCLEOTIDE SEQUENCE [MRNA] (ISOFORM 1)</scope>
</reference>
<reference key="2">
    <citation type="journal article" date="1988" name="Mol. Endocrinol.">
        <title>A novel low molecular weight ribonucleic acid (RNA) related to transforming growth factor alpha messenger RNA.</title>
        <authorList>
            <person name="Jakowlew S.B."/>
            <person name="Kondaiah P."/>
            <person name="Dillard P.J."/>
            <person name="Sporn M.B."/>
            <person name="Roberts A.B."/>
        </authorList>
    </citation>
    <scope>NUCLEOTIDE SEQUENCE [MRNA] (ISOFORM 1)</scope>
</reference>
<reference key="3">
    <citation type="journal article" date="1993" name="Gene">
        <title>Human transforming growth factor alpha: sequence analysis of the 4.5-kb and 1.6-kb mRNA species.</title>
        <authorList>
            <person name="Qian J.F."/>
            <person name="Lazar-Wesley E."/>
            <person name="Breugnot C."/>
            <person name="May E."/>
        </authorList>
    </citation>
    <scope>NUCLEOTIDE SEQUENCE [MRNA] (ISOFORM 1)</scope>
    <source>
        <tissue>Colon</tissue>
    </source>
</reference>
<reference key="4">
    <citation type="journal article" date="1993" name="Am. J. Hum. Genet.">
        <title>Transforming growth factor-alpha: characterization of the BamHI, RsaI, and TaqI polymorphic regions.</title>
        <authorList>
            <person name="Qian J.F."/>
            <person name="Feingold J."/>
            <person name="Stoll C."/>
            <person name="May E."/>
        </authorList>
    </citation>
    <scope>NUCLEOTIDE SEQUENCE [MRNA] (ISOFORM 1)</scope>
</reference>
<reference key="5">
    <citation type="journal article" date="1999" name="Genomics">
        <title>Transforming growth factor-alpha (TGFA): genomic structure, boundary sequences, and mutation analysis in nonsyndromic cleft lip/palate and cleft palate only.</title>
        <authorList>
            <person name="Machida J."/>
            <person name="Yoshiura K."/>
            <person name="Funkhauser C.D."/>
            <person name="Natsume N."/>
            <person name="Kawai T."/>
            <person name="Murray J.C."/>
        </authorList>
    </citation>
    <scope>NUCLEOTIDE SEQUENCE [GENOMIC DNA]</scope>
</reference>
<reference key="6">
    <citation type="journal article" date="1999" name="Oncogene">
        <title>Human keratinocytes and tumor-derived cell lines express alternatively spliced forms of transforming growth factor-alpha mRNA, encoding precursors lacking carboxyl-terminal valine residues.</title>
        <authorList>
            <person name="Xu X."/>
            <person name="Liao J."/>
            <person name="Creek K.E."/>
            <person name="Pirisi L."/>
        </authorList>
    </citation>
    <scope>NUCLEOTIDE SEQUENCE [MRNA] (ISOFORMS 3; 4 AND 5)</scope>
    <scope>TISSUE SPECIFICITY</scope>
</reference>
<reference key="7">
    <citation type="submission" date="2003-05" db="EMBL/GenBank/DDBJ databases">
        <title>Cloning of human full-length CDSs in BD Creator(TM) System Donor vector.</title>
        <authorList>
            <person name="Kalnine N."/>
            <person name="Chen X."/>
            <person name="Rolfs A."/>
            <person name="Halleck A."/>
            <person name="Hines L."/>
            <person name="Eisenstein S."/>
            <person name="Koundinya M."/>
            <person name="Raphael J."/>
            <person name="Moreira D."/>
            <person name="Kelley T."/>
            <person name="LaBaer J."/>
            <person name="Lin Y."/>
            <person name="Phelan M."/>
            <person name="Farmer A."/>
        </authorList>
    </citation>
    <scope>NUCLEOTIDE SEQUENCE [LARGE SCALE MRNA] (ISOFORM 2)</scope>
</reference>
<reference key="8">
    <citation type="journal article" date="2004" name="Nat. Genet.">
        <title>Complete sequencing and characterization of 21,243 full-length human cDNAs.</title>
        <authorList>
            <person name="Ota T."/>
            <person name="Suzuki Y."/>
            <person name="Nishikawa T."/>
            <person name="Otsuki T."/>
            <person name="Sugiyama T."/>
            <person name="Irie R."/>
            <person name="Wakamatsu A."/>
            <person name="Hayashi K."/>
            <person name="Sato H."/>
            <person name="Nagai K."/>
            <person name="Kimura K."/>
            <person name="Makita H."/>
            <person name="Sekine M."/>
            <person name="Obayashi M."/>
            <person name="Nishi T."/>
            <person name="Shibahara T."/>
            <person name="Tanaka T."/>
            <person name="Ishii S."/>
            <person name="Yamamoto J."/>
            <person name="Saito K."/>
            <person name="Kawai Y."/>
            <person name="Isono Y."/>
            <person name="Nakamura Y."/>
            <person name="Nagahari K."/>
            <person name="Murakami K."/>
            <person name="Yasuda T."/>
            <person name="Iwayanagi T."/>
            <person name="Wagatsuma M."/>
            <person name="Shiratori A."/>
            <person name="Sudo H."/>
            <person name="Hosoiri T."/>
            <person name="Kaku Y."/>
            <person name="Kodaira H."/>
            <person name="Kondo H."/>
            <person name="Sugawara M."/>
            <person name="Takahashi M."/>
            <person name="Kanda K."/>
            <person name="Yokoi T."/>
            <person name="Furuya T."/>
            <person name="Kikkawa E."/>
            <person name="Omura Y."/>
            <person name="Abe K."/>
            <person name="Kamihara K."/>
            <person name="Katsuta N."/>
            <person name="Sato K."/>
            <person name="Tanikawa M."/>
            <person name="Yamazaki M."/>
            <person name="Ninomiya K."/>
            <person name="Ishibashi T."/>
            <person name="Yamashita H."/>
            <person name="Murakawa K."/>
            <person name="Fujimori K."/>
            <person name="Tanai H."/>
            <person name="Kimata M."/>
            <person name="Watanabe M."/>
            <person name="Hiraoka S."/>
            <person name="Chiba Y."/>
            <person name="Ishida S."/>
            <person name="Ono Y."/>
            <person name="Takiguchi S."/>
            <person name="Watanabe S."/>
            <person name="Yosida M."/>
            <person name="Hotuta T."/>
            <person name="Kusano J."/>
            <person name="Kanehori K."/>
            <person name="Takahashi-Fujii A."/>
            <person name="Hara H."/>
            <person name="Tanase T.-O."/>
            <person name="Nomura Y."/>
            <person name="Togiya S."/>
            <person name="Komai F."/>
            <person name="Hara R."/>
            <person name="Takeuchi K."/>
            <person name="Arita M."/>
            <person name="Imose N."/>
            <person name="Musashino K."/>
            <person name="Yuuki H."/>
            <person name="Oshima A."/>
            <person name="Sasaki N."/>
            <person name="Aotsuka S."/>
            <person name="Yoshikawa Y."/>
            <person name="Matsunawa H."/>
            <person name="Ichihara T."/>
            <person name="Shiohata N."/>
            <person name="Sano S."/>
            <person name="Moriya S."/>
            <person name="Momiyama H."/>
            <person name="Satoh N."/>
            <person name="Takami S."/>
            <person name="Terashima Y."/>
            <person name="Suzuki O."/>
            <person name="Nakagawa S."/>
            <person name="Senoh A."/>
            <person name="Mizoguchi H."/>
            <person name="Goto Y."/>
            <person name="Shimizu F."/>
            <person name="Wakebe H."/>
            <person name="Hishigaki H."/>
            <person name="Watanabe T."/>
            <person name="Sugiyama A."/>
            <person name="Takemoto M."/>
            <person name="Kawakami B."/>
            <person name="Yamazaki M."/>
            <person name="Watanabe K."/>
            <person name="Kumagai A."/>
            <person name="Itakura S."/>
            <person name="Fukuzumi Y."/>
            <person name="Fujimori Y."/>
            <person name="Komiyama M."/>
            <person name="Tashiro H."/>
            <person name="Tanigami A."/>
            <person name="Fujiwara T."/>
            <person name="Ono T."/>
            <person name="Yamada K."/>
            <person name="Fujii Y."/>
            <person name="Ozaki K."/>
            <person name="Hirao M."/>
            <person name="Ohmori Y."/>
            <person name="Kawabata A."/>
            <person name="Hikiji T."/>
            <person name="Kobatake N."/>
            <person name="Inagaki H."/>
            <person name="Ikema Y."/>
            <person name="Okamoto S."/>
            <person name="Okitani R."/>
            <person name="Kawakami T."/>
            <person name="Noguchi S."/>
            <person name="Itoh T."/>
            <person name="Shigeta K."/>
            <person name="Senba T."/>
            <person name="Matsumura K."/>
            <person name="Nakajima Y."/>
            <person name="Mizuno T."/>
            <person name="Morinaga M."/>
            <person name="Sasaki M."/>
            <person name="Togashi T."/>
            <person name="Oyama M."/>
            <person name="Hata H."/>
            <person name="Watanabe M."/>
            <person name="Komatsu T."/>
            <person name="Mizushima-Sugano J."/>
            <person name="Satoh T."/>
            <person name="Shirai Y."/>
            <person name="Takahashi Y."/>
            <person name="Nakagawa K."/>
            <person name="Okumura K."/>
            <person name="Nagase T."/>
            <person name="Nomura N."/>
            <person name="Kikuchi H."/>
            <person name="Masuho Y."/>
            <person name="Yamashita R."/>
            <person name="Nakai K."/>
            <person name="Yada T."/>
            <person name="Nakamura Y."/>
            <person name="Ohara O."/>
            <person name="Isogai T."/>
            <person name="Sugano S."/>
        </authorList>
    </citation>
    <scope>NUCLEOTIDE SEQUENCE [LARGE SCALE MRNA] (ISOFORM 1)</scope>
    <source>
        <tissue>Thalamus</tissue>
    </source>
</reference>
<reference key="9">
    <citation type="journal article" date="2005" name="Nature">
        <title>Generation and annotation of the DNA sequences of human chromosomes 2 and 4.</title>
        <authorList>
            <person name="Hillier L.W."/>
            <person name="Graves T.A."/>
            <person name="Fulton R.S."/>
            <person name="Fulton L.A."/>
            <person name="Pepin K.H."/>
            <person name="Minx P."/>
            <person name="Wagner-McPherson C."/>
            <person name="Layman D."/>
            <person name="Wylie K."/>
            <person name="Sekhon M."/>
            <person name="Becker M.C."/>
            <person name="Fewell G.A."/>
            <person name="Delehaunty K.D."/>
            <person name="Miner T.L."/>
            <person name="Nash W.E."/>
            <person name="Kremitzki C."/>
            <person name="Oddy L."/>
            <person name="Du H."/>
            <person name="Sun H."/>
            <person name="Bradshaw-Cordum H."/>
            <person name="Ali J."/>
            <person name="Carter J."/>
            <person name="Cordes M."/>
            <person name="Harris A."/>
            <person name="Isak A."/>
            <person name="van Brunt A."/>
            <person name="Nguyen C."/>
            <person name="Du F."/>
            <person name="Courtney L."/>
            <person name="Kalicki J."/>
            <person name="Ozersky P."/>
            <person name="Abbott S."/>
            <person name="Armstrong J."/>
            <person name="Belter E.A."/>
            <person name="Caruso L."/>
            <person name="Cedroni M."/>
            <person name="Cotton M."/>
            <person name="Davidson T."/>
            <person name="Desai A."/>
            <person name="Elliott G."/>
            <person name="Erb T."/>
            <person name="Fronick C."/>
            <person name="Gaige T."/>
            <person name="Haakenson W."/>
            <person name="Haglund K."/>
            <person name="Holmes A."/>
            <person name="Harkins R."/>
            <person name="Kim K."/>
            <person name="Kruchowski S.S."/>
            <person name="Strong C.M."/>
            <person name="Grewal N."/>
            <person name="Goyea E."/>
            <person name="Hou S."/>
            <person name="Levy A."/>
            <person name="Martinka S."/>
            <person name="Mead K."/>
            <person name="McLellan M.D."/>
            <person name="Meyer R."/>
            <person name="Randall-Maher J."/>
            <person name="Tomlinson C."/>
            <person name="Dauphin-Kohlberg S."/>
            <person name="Kozlowicz-Reilly A."/>
            <person name="Shah N."/>
            <person name="Swearengen-Shahid S."/>
            <person name="Snider J."/>
            <person name="Strong J.T."/>
            <person name="Thompson J."/>
            <person name="Yoakum M."/>
            <person name="Leonard S."/>
            <person name="Pearman C."/>
            <person name="Trani L."/>
            <person name="Radionenko M."/>
            <person name="Waligorski J.E."/>
            <person name="Wang C."/>
            <person name="Rock S.M."/>
            <person name="Tin-Wollam A.-M."/>
            <person name="Maupin R."/>
            <person name="Latreille P."/>
            <person name="Wendl M.C."/>
            <person name="Yang S.-P."/>
            <person name="Pohl C."/>
            <person name="Wallis J.W."/>
            <person name="Spieth J."/>
            <person name="Bieri T.A."/>
            <person name="Berkowicz N."/>
            <person name="Nelson J.O."/>
            <person name="Osborne J."/>
            <person name="Ding L."/>
            <person name="Meyer R."/>
            <person name="Sabo A."/>
            <person name="Shotland Y."/>
            <person name="Sinha P."/>
            <person name="Wohldmann P.E."/>
            <person name="Cook L.L."/>
            <person name="Hickenbotham M.T."/>
            <person name="Eldred J."/>
            <person name="Williams D."/>
            <person name="Jones T.A."/>
            <person name="She X."/>
            <person name="Ciccarelli F.D."/>
            <person name="Izaurralde E."/>
            <person name="Taylor J."/>
            <person name="Schmutz J."/>
            <person name="Myers R.M."/>
            <person name="Cox D.R."/>
            <person name="Huang X."/>
            <person name="McPherson J.D."/>
            <person name="Mardis E.R."/>
            <person name="Clifton S.W."/>
            <person name="Warren W.C."/>
            <person name="Chinwalla A.T."/>
            <person name="Eddy S.R."/>
            <person name="Marra M.A."/>
            <person name="Ovcharenko I."/>
            <person name="Furey T.S."/>
            <person name="Miller W."/>
            <person name="Eichler E.E."/>
            <person name="Bork P."/>
            <person name="Suyama M."/>
            <person name="Torrents D."/>
            <person name="Waterston R.H."/>
            <person name="Wilson R.K."/>
        </authorList>
    </citation>
    <scope>NUCLEOTIDE SEQUENCE [LARGE SCALE GENOMIC DNA]</scope>
</reference>
<reference key="10">
    <citation type="submission" date="2005-09" db="EMBL/GenBank/DDBJ databases">
        <authorList>
            <person name="Mural R.J."/>
            <person name="Istrail S."/>
            <person name="Sutton G.G."/>
            <person name="Florea L."/>
            <person name="Halpern A.L."/>
            <person name="Mobarry C.M."/>
            <person name="Lippert R."/>
            <person name="Walenz B."/>
            <person name="Shatkay H."/>
            <person name="Dew I."/>
            <person name="Miller J.R."/>
            <person name="Flanigan M.J."/>
            <person name="Edwards N.J."/>
            <person name="Bolanos R."/>
            <person name="Fasulo D."/>
            <person name="Halldorsson B.V."/>
            <person name="Hannenhalli S."/>
            <person name="Turner R."/>
            <person name="Yooseph S."/>
            <person name="Lu F."/>
            <person name="Nusskern D.R."/>
            <person name="Shue B.C."/>
            <person name="Zheng X.H."/>
            <person name="Zhong F."/>
            <person name="Delcher A.L."/>
            <person name="Huson D.H."/>
            <person name="Kravitz S.A."/>
            <person name="Mouchard L."/>
            <person name="Reinert K."/>
            <person name="Remington K.A."/>
            <person name="Clark A.G."/>
            <person name="Waterman M.S."/>
            <person name="Eichler E.E."/>
            <person name="Adams M.D."/>
            <person name="Hunkapiller M.W."/>
            <person name="Myers E.W."/>
            <person name="Venter J.C."/>
        </authorList>
    </citation>
    <scope>NUCLEOTIDE SEQUENCE [LARGE SCALE GENOMIC DNA]</scope>
</reference>
<reference key="11">
    <citation type="journal article" date="2004" name="Genome Res.">
        <title>The status, quality, and expansion of the NIH full-length cDNA project: the Mammalian Gene Collection (MGC).</title>
        <authorList>
            <consortium name="The MGC Project Team"/>
        </authorList>
    </citation>
    <scope>NUCLEOTIDE SEQUENCE [LARGE SCALE MRNA] (ISOFORM 2)</scope>
    <source>
        <tissue>Kidney</tissue>
    </source>
</reference>
<reference key="12">
    <citation type="journal article" date="1988" name="Mol. Cell. Biol.">
        <title>The human transforming growth factor alpha promoter directs transcription initiation from a single site in the absence of a TATA sequence.</title>
        <authorList>
            <person name="Jakobovits E.B."/>
            <person name="Schlokat U."/>
            <person name="Vannice J.L."/>
            <person name="Derynck R."/>
            <person name="Levinson A.D."/>
        </authorList>
    </citation>
    <scope>NUCLEOTIDE SEQUENCE [GENOMIC DNA] OF 1-58</scope>
</reference>
<reference key="13">
    <citation type="journal article" date="1999" name="Clin. Genet.">
        <title>TGFA: exon-intron structure and evaluation as a candidate gene for Alstrom syndrome.</title>
        <authorList>
            <person name="Collin G.B."/>
            <person name="Marshall J.D."/>
            <person name="Naggert J.K."/>
            <person name="Nishina P.M."/>
        </authorList>
    </citation>
    <scope>NUCLEOTIDE SEQUENCE [GENOMIC DNA] OF 1-31</scope>
</reference>
<reference key="14">
    <citation type="journal article" date="1992" name="Anal. Biochem.">
        <title>Characterization of disulfide bond position in proteins and sequence analysis of cystine-bridged peptides by tandem mass spectrometry.</title>
        <authorList>
            <person name="Bean M.F."/>
            <person name="Carr S.A."/>
        </authorList>
    </citation>
    <scope>DISULFIDE BONDS</scope>
</reference>
<reference key="15">
    <citation type="journal article" date="1996" name="J. Biol. Chem.">
        <title>Cysteines 153 and 154 of transmembrane transforming growth factor-alpha are palmitoylated and mediate cytoplasmic protein association.</title>
        <authorList>
            <person name="Shum L."/>
            <person name="Turck C.W."/>
            <person name="Derynck R."/>
        </authorList>
    </citation>
    <scope>PALMITOYLATION AT CYS-153 AND CYS-154</scope>
</reference>
<reference key="16">
    <citation type="journal article" date="1999" name="Mol. Cell">
        <title>A role for a PDZ protein in the early secretory pathway for the targeting of proTGF-alpha to the cell surface.</title>
        <authorList>
            <person name="Fernandez-Larrea J."/>
            <person name="Merlos-Suarez A."/>
            <person name="Urena J.M."/>
            <person name="Baselga J."/>
            <person name="Arribas J."/>
        </authorList>
    </citation>
    <scope>INTERACTION WITH SNTA1 AND SDCBP</scope>
</reference>
<reference key="17">
    <citation type="journal article" date="2007" name="J. Cell Sci.">
        <title>Cornichon regulates transport and secretion of TGFalpha-related proteins in metazoan cells.</title>
        <authorList>
            <person name="Perez Castro C."/>
            <person name="Piscopo D."/>
            <person name="Nakagawa T."/>
            <person name="Derynck R."/>
        </authorList>
    </citation>
    <scope>INTERACTION WITH CNIH AND GORASP2</scope>
</reference>
<reference key="18">
    <citation type="journal article" date="2008" name="Proc. Natl. Acad. Sci. U.S.A.">
        <title>EGF receptor-independent action of TGF-alpha protects Naked2 from AO7-mediated ubiquitylation and proteasomal degradation.</title>
        <authorList>
            <person name="Ding W."/>
            <person name="Li C."/>
            <person name="Hu T."/>
            <person name="Graves-Deal R."/>
            <person name="Fotia A.B."/>
            <person name="Weissman A.M."/>
            <person name="Coffey R.J."/>
        </authorList>
    </citation>
    <scope>INTERACTION WITH NKD2</scope>
</reference>
<reference key="19">
    <citation type="journal article" date="1990" name="Biochemistry">
        <title>Solution structures of human transforming growth factor alpha derived from 1H NMR data.</title>
        <authorList>
            <person name="Kline T.P."/>
            <person name="Brown F.K."/>
            <person name="Brown S.C."/>
            <person name="Jeffs P.W."/>
            <person name="Kopple K.D."/>
            <person name="Mueller L."/>
        </authorList>
    </citation>
    <scope>STRUCTURE BY NMR OF TGF-ALPHA</scope>
</reference>
<reference key="20">
    <citation type="journal article" date="1991" name="Eur. J. Biochem.">
        <title>The solution structure of human transforming growth factor alpha.</title>
        <authorList>
            <person name="Harvey T.S."/>
            <person name="Wilkinson A.J."/>
            <person name="Tappin M.J."/>
            <person name="Cooke R.M."/>
            <person name="Campbell I.D."/>
        </authorList>
    </citation>
    <scope>STRUCTURE BY NMR OF TGF-ALPHA</scope>
</reference>
<reference key="21">
    <citation type="journal article" date="1993" name="Biochemistry">
        <title>Solution structure of human type-alpha transforming growth factor determined by heteronuclear NMR spectroscopy and refined by energy minimization with restraints.</title>
        <authorList>
            <person name="Moy F.J."/>
            <person name="Li Y.C."/>
            <person name="Rauenbuehler P."/>
            <person name="Winkler M.E."/>
            <person name="Scheraga H.A."/>
            <person name="Montelione G.T."/>
        </authorList>
    </citation>
    <scope>STRUCTURE BY NMR OF TGF-ALPHA</scope>
</reference>
<name>TGFA_HUMAN</name>
<keyword id="KW-0002">3D-structure</keyword>
<keyword id="KW-0025">Alternative splicing</keyword>
<keyword id="KW-1003">Cell membrane</keyword>
<keyword id="KW-1015">Disulfide bond</keyword>
<keyword id="KW-0245">EGF-like domain</keyword>
<keyword id="KW-0325">Glycoprotein</keyword>
<keyword id="KW-0339">Growth factor</keyword>
<keyword id="KW-0449">Lipoprotein</keyword>
<keyword id="KW-0472">Membrane</keyword>
<keyword id="KW-0497">Mitogen</keyword>
<keyword id="KW-0564">Palmitate</keyword>
<keyword id="KW-1267">Proteomics identification</keyword>
<keyword id="KW-1185">Reference proteome</keyword>
<keyword id="KW-0964">Secreted</keyword>
<keyword id="KW-0732">Signal</keyword>
<keyword id="KW-0812">Transmembrane</keyword>
<keyword id="KW-1133">Transmembrane helix</keyword>
<protein>
    <recommendedName>
        <fullName>Protransforming growth factor alpha</fullName>
    </recommendedName>
    <component>
        <recommendedName>
            <fullName>Transforming growth factor alpha</fullName>
            <shortName>TGF-alpha</shortName>
        </recommendedName>
        <alternativeName>
            <fullName>EGF-like TGF</fullName>
            <shortName>ETGF</shortName>
        </alternativeName>
        <alternativeName>
            <fullName>TGF type 1</fullName>
        </alternativeName>
    </component>
</protein>
<feature type="signal peptide" evidence="1">
    <location>
        <begin position="1"/>
        <end position="23"/>
    </location>
</feature>
<feature type="chain" id="PRO_0000302744" description="Protransforming growth factor alpha">
    <location>
        <begin position="24"/>
        <end position="160"/>
    </location>
</feature>
<feature type="propeptide" id="PRO_0000007752" description="Removed in mature form">
    <location>
        <begin position="24"/>
        <end position="39"/>
    </location>
</feature>
<feature type="chain" id="PRO_0000007753" description="Transforming growth factor alpha">
    <location>
        <begin position="40"/>
        <end position="89"/>
    </location>
</feature>
<feature type="propeptide" id="PRO_0000007754" description="Removed in mature form">
    <location>
        <begin position="90"/>
        <end position="160"/>
    </location>
</feature>
<feature type="topological domain" description="Extracellular" evidence="1">
    <location>
        <begin position="24"/>
        <end position="98"/>
    </location>
</feature>
<feature type="transmembrane region" description="Helical" evidence="1">
    <location>
        <begin position="99"/>
        <end position="124"/>
    </location>
</feature>
<feature type="topological domain" description="Cytoplasmic" evidence="1">
    <location>
        <begin position="125"/>
        <end position="160"/>
    </location>
</feature>
<feature type="domain" description="EGF-like" evidence="2">
    <location>
        <begin position="43"/>
        <end position="83"/>
    </location>
</feature>
<feature type="lipid moiety-binding region" description="S-palmitoyl cysteine" evidence="8">
    <location>
        <position position="153"/>
    </location>
</feature>
<feature type="lipid moiety-binding region" description="S-palmitoyl cysteine" evidence="8">
    <location>
        <position position="154"/>
    </location>
</feature>
<feature type="glycosylation site" description="N-linked (GlcNAc...) asparagine" evidence="1">
    <location>
        <position position="25"/>
    </location>
</feature>
<feature type="disulfide bond" evidence="2 5">
    <location>
        <begin position="47"/>
        <end position="60"/>
    </location>
</feature>
<feature type="disulfide bond" evidence="2 5">
    <location>
        <begin position="55"/>
        <end position="71"/>
    </location>
</feature>
<feature type="disulfide bond" evidence="2 5">
    <location>
        <begin position="73"/>
        <end position="82"/>
    </location>
</feature>
<feature type="splice variant" id="VSP_038369" description="In isoform 2, isoform 3 and isoform 5." evidence="9 10 11">
    <location>
        <position position="32"/>
    </location>
</feature>
<feature type="splice variant" id="VSP_038370" description="In isoform 3." evidence="9">
    <original>VV</original>
    <variation>ATLG</variation>
    <location>
        <begin position="159"/>
        <end position="160"/>
    </location>
</feature>
<feature type="splice variant" id="VSP_038371" description="In isoform 4 and isoform 5." evidence="9">
    <original>VV</original>
    <variation>GCRLY</variation>
    <location>
        <begin position="159"/>
        <end position="160"/>
    </location>
</feature>
<feature type="sequence variant" id="VAR_024271" description="In dbSNP:rs11466259.">
    <original>V</original>
    <variation>M</variation>
    <location>
        <position position="109"/>
    </location>
</feature>
<feature type="sequence conflict" description="In Ref. 2; AAA61157." evidence="12" ref="2">
    <original>G</original>
    <variation>A</variation>
    <location>
        <position position="58"/>
    </location>
</feature>
<feature type="sequence conflict" description="In Ref. 2; AAA61157." evidence="12" ref="2">
    <original>Q</original>
    <variation>H</variation>
    <location>
        <position position="65"/>
    </location>
</feature>
<feature type="sequence conflict" description="In Ref. 2; AAA61157." evidence="12" ref="2">
    <original>V</original>
    <variation>L</variation>
    <location>
        <position position="159"/>
    </location>
</feature>
<feature type="strand" evidence="13">
    <location>
        <begin position="43"/>
        <end position="45"/>
    </location>
</feature>
<feature type="helix" evidence="14">
    <location>
        <begin position="51"/>
        <end position="54"/>
    </location>
</feature>
<feature type="strand" evidence="13">
    <location>
        <begin position="58"/>
        <end position="63"/>
    </location>
</feature>
<feature type="turn" evidence="13">
    <location>
        <begin position="64"/>
        <end position="67"/>
    </location>
</feature>
<feature type="strand" evidence="13">
    <location>
        <begin position="68"/>
        <end position="73"/>
    </location>
</feature>
<feature type="strand" evidence="13">
    <location>
        <begin position="77"/>
        <end position="79"/>
    </location>
</feature>
<feature type="strand" evidence="15">
    <location>
        <begin position="84"/>
        <end position="86"/>
    </location>
</feature>
<proteinExistence type="evidence at protein level"/>
<gene>
    <name type="primary">TGFA</name>
</gene>
<comment type="function">
    <text>TGF alpha is a mitogenic polypeptide that is able to bind to the EGF receptor/EGFR and to act synergistically with TGF beta to promote anchorage-independent cell proliferation in soft agar.</text>
</comment>
<comment type="subunit">
    <text evidence="3 6 7">Interacts with the PDZ domains of MAGI3, SDCBP and SNTA1. The interaction with SDCBP, is required for the targeting to the cell surface. In the endoplasmic reticulum, in its immature form (i.e. with a prosegment and lacking full N-glycosylation), interacts with CNIH. In the Golgi apparatus, may form a complex with CNIH and GORASP2. Interacts (via cytoplasmic C-terminal domain) with NKD2.</text>
</comment>
<comment type="interaction">
    <interactant intactId="EBI-1034374">
        <id>P01135</id>
    </interactant>
    <interactant intactId="EBI-297353">
        <id>P00533</id>
        <label>EGFR</label>
    </interactant>
    <organismsDiffer>false</organismsDiffer>
    <experiments>4</experiments>
</comment>
<comment type="interaction">
    <interactant intactId="EBI-1034374">
        <id>P01135</id>
    </interactant>
    <interactant intactId="EBI-1538629">
        <id>Q969F2</id>
        <label>NKD2</label>
    </interactant>
    <organismsDiffer>false</organismsDiffer>
    <experiments>3</experiments>
</comment>
<comment type="interaction">
    <interactant intactId="EBI-1034374">
        <id>P01135</id>
    </interactant>
    <interactant intactId="EBI-347996">
        <id>O43765</id>
        <label>SGTA</label>
    </interactant>
    <organismsDiffer>false</organismsDiffer>
    <experiments>3</experiments>
</comment>
<comment type="interaction">
    <interactant intactId="EBI-1034374">
        <id>P01135</id>
    </interactant>
    <interactant intactId="EBI-7455245">
        <id>Q9EQJ9</id>
        <label>Magi3</label>
    </interactant>
    <organismsDiffer>true</organismsDiffer>
    <experiments>4</experiments>
</comment>
<comment type="interaction">
    <interactant intactId="EBI-12367411">
        <id>P01135-2</id>
    </interactant>
    <interactant intactId="EBI-750776">
        <id>O95214</id>
        <label>LEPROTL1</label>
    </interactant>
    <organismsDiffer>false</organismsDiffer>
    <experiments>3</experiments>
</comment>
<comment type="interaction">
    <interactant intactId="EBI-12367411">
        <id>P01135-2</id>
    </interactant>
    <interactant intactId="EBI-347996">
        <id>O43765</id>
        <label>SGTA</label>
    </interactant>
    <organismsDiffer>false</organismsDiffer>
    <experiments>6</experiments>
</comment>
<comment type="subcellular location">
    <molecule>Transforming growth factor alpha</molecule>
    <subcellularLocation>
        <location>Secreted</location>
        <location>Extracellular space</location>
    </subcellularLocation>
</comment>
<comment type="subcellular location">
    <molecule>Protransforming growth factor alpha</molecule>
    <subcellularLocation>
        <location>Cell membrane</location>
        <topology>Single-pass type I membrane protein</topology>
    </subcellularLocation>
</comment>
<comment type="alternative products">
    <event type="alternative splicing"/>
    <isoform>
        <id>P01135-1</id>
        <name>1</name>
        <sequence type="displayed"/>
    </isoform>
    <isoform>
        <id>P01135-2</id>
        <name>2</name>
        <sequence type="described" ref="VSP_038369"/>
    </isoform>
    <isoform>
        <id>P01135-3</id>
        <name>3</name>
        <name>VaII</name>
        <sequence type="described" ref="VSP_038369 VSP_038370"/>
    </isoform>
    <isoform>
        <id>P01135-4</id>
        <name>4</name>
        <name>VaI</name>
        <sequence type="described" ref="VSP_038371"/>
    </isoform>
    <isoform>
        <id>P01135-5</id>
        <name>5</name>
        <name>VaIM</name>
        <sequence type="described" ref="VSP_038369 VSP_038371"/>
    </isoform>
</comment>
<comment type="tissue specificity">
    <text evidence="4">Isoform 1, isoform 3 and isoform 4 are expressed in keratinocytes and tumor-derived cell lines.</text>
</comment>
<evidence type="ECO:0000255" key="1"/>
<evidence type="ECO:0000255" key="2">
    <source>
        <dbReference type="PROSITE-ProRule" id="PRU00076"/>
    </source>
</evidence>
<evidence type="ECO:0000269" key="3">
    <source>
    </source>
</evidence>
<evidence type="ECO:0000269" key="4">
    <source>
    </source>
</evidence>
<evidence type="ECO:0000269" key="5">
    <source>
    </source>
</evidence>
<evidence type="ECO:0000269" key="6">
    <source>
    </source>
</evidence>
<evidence type="ECO:0000269" key="7">
    <source>
    </source>
</evidence>
<evidence type="ECO:0000269" key="8">
    <source>
    </source>
</evidence>
<evidence type="ECO:0000303" key="9">
    <source>
    </source>
</evidence>
<evidence type="ECO:0000303" key="10">
    <source>
    </source>
</evidence>
<evidence type="ECO:0000303" key="11">
    <source ref="7"/>
</evidence>
<evidence type="ECO:0000305" key="12"/>
<evidence type="ECO:0007829" key="13">
    <source>
        <dbReference type="PDB" id="1MOX"/>
    </source>
</evidence>
<evidence type="ECO:0007829" key="14">
    <source>
        <dbReference type="PDB" id="1YUF"/>
    </source>
</evidence>
<evidence type="ECO:0007829" key="15">
    <source>
        <dbReference type="PDB" id="5KN5"/>
    </source>
</evidence>
<dbReference type="EMBL" id="K03222">
    <property type="protein sequence ID" value="AAA61159.1"/>
    <property type="molecule type" value="mRNA"/>
</dbReference>
<dbReference type="EMBL" id="M31172">
    <property type="protein sequence ID" value="AAA61157.1"/>
    <property type="molecule type" value="mRNA"/>
</dbReference>
<dbReference type="EMBL" id="X70340">
    <property type="protein sequence ID" value="CAA49806.1"/>
    <property type="molecule type" value="mRNA"/>
</dbReference>
<dbReference type="EMBL" id="AF123243">
    <property type="protein sequence ID" value="AAF13491.1"/>
    <property type="molecule type" value="Genomic_DNA"/>
</dbReference>
<dbReference type="EMBL" id="AF123238">
    <property type="protein sequence ID" value="AAF13491.1"/>
    <property type="status" value="JOINED"/>
    <property type="molecule type" value="Genomic_DNA"/>
</dbReference>
<dbReference type="EMBL" id="AF123239">
    <property type="protein sequence ID" value="AAF13491.1"/>
    <property type="status" value="JOINED"/>
    <property type="molecule type" value="Genomic_DNA"/>
</dbReference>
<dbReference type="EMBL" id="AF123240">
    <property type="protein sequence ID" value="AAF13491.1"/>
    <property type="status" value="JOINED"/>
    <property type="molecule type" value="Genomic_DNA"/>
</dbReference>
<dbReference type="EMBL" id="AF123241">
    <property type="protein sequence ID" value="AAF13491.1"/>
    <property type="status" value="JOINED"/>
    <property type="molecule type" value="Genomic_DNA"/>
</dbReference>
<dbReference type="EMBL" id="AF123242">
    <property type="protein sequence ID" value="AAF13491.1"/>
    <property type="status" value="JOINED"/>
    <property type="molecule type" value="Genomic_DNA"/>
</dbReference>
<dbReference type="EMBL" id="AY325886">
    <property type="protein sequence ID" value="AAP97822.2"/>
    <property type="molecule type" value="Genomic_DNA"/>
</dbReference>
<dbReference type="EMBL" id="AY325885">
    <property type="protein sequence ID" value="AAP97822.2"/>
    <property type="status" value="JOINED"/>
    <property type="molecule type" value="Genomic_DNA"/>
</dbReference>
<dbReference type="EMBL" id="AY326405">
    <property type="protein sequence ID" value="AAP97822.2"/>
    <property type="status" value="JOINED"/>
    <property type="molecule type" value="Genomic_DNA"/>
</dbReference>
<dbReference type="EMBL" id="AY327131">
    <property type="protein sequence ID" value="AAP97822.2"/>
    <property type="status" value="JOINED"/>
    <property type="molecule type" value="Genomic_DNA"/>
</dbReference>
<dbReference type="EMBL" id="AY327132">
    <property type="protein sequence ID" value="AAP97822.2"/>
    <property type="status" value="JOINED"/>
    <property type="molecule type" value="Genomic_DNA"/>
</dbReference>
<dbReference type="EMBL" id="AY329368">
    <property type="protein sequence ID" value="AAP97822.2"/>
    <property type="status" value="JOINED"/>
    <property type="molecule type" value="Genomic_DNA"/>
</dbReference>
<dbReference type="EMBL" id="AF149096">
    <property type="protein sequence ID" value="AAF05089.1"/>
    <property type="molecule type" value="mRNA"/>
</dbReference>
<dbReference type="EMBL" id="AF149097">
    <property type="protein sequence ID" value="AAF05090.1"/>
    <property type="molecule type" value="mRNA"/>
</dbReference>
<dbReference type="EMBL" id="AF149098">
    <property type="protein sequence ID" value="AAF05091.1"/>
    <property type="molecule type" value="mRNA"/>
</dbReference>
<dbReference type="EMBL" id="BT006833">
    <property type="protein sequence ID" value="AAP35479.1"/>
    <property type="molecule type" value="mRNA"/>
</dbReference>
<dbReference type="EMBL" id="AK290151">
    <property type="protein sequence ID" value="BAF82840.1"/>
    <property type="molecule type" value="mRNA"/>
</dbReference>
<dbReference type="EMBL" id="AC005234">
    <property type="protein sequence ID" value="AAY14793.1"/>
    <property type="molecule type" value="Genomic_DNA"/>
</dbReference>
<dbReference type="EMBL" id="AC017084">
    <property type="protein sequence ID" value="AAY14705.1"/>
    <property type="molecule type" value="Genomic_DNA"/>
</dbReference>
<dbReference type="EMBL" id="CH471053">
    <property type="protein sequence ID" value="EAW99810.1"/>
    <property type="molecule type" value="Genomic_DNA"/>
</dbReference>
<dbReference type="EMBL" id="CH471053">
    <property type="protein sequence ID" value="EAW99812.1"/>
    <property type="molecule type" value="Genomic_DNA"/>
</dbReference>
<dbReference type="EMBL" id="BC005308">
    <property type="protein sequence ID" value="AAH05308.1"/>
    <property type="molecule type" value="mRNA"/>
</dbReference>
<dbReference type="EMBL" id="M22440">
    <property type="protein sequence ID" value="AAA52530.1"/>
    <property type="molecule type" value="Genomic_DNA"/>
</dbReference>
<dbReference type="EMBL" id="AF075584">
    <property type="protein sequence ID" value="AAD12238.1"/>
    <property type="molecule type" value="Genomic_DNA"/>
</dbReference>
<dbReference type="EMBL" id="AF075583">
    <property type="protein sequence ID" value="AAD12238.1"/>
    <property type="status" value="JOINED"/>
    <property type="molecule type" value="Genomic_DNA"/>
</dbReference>
<dbReference type="CCDS" id="CCDS1905.1">
    <molecule id="P01135-1"/>
</dbReference>
<dbReference type="CCDS" id="CCDS46316.1">
    <molecule id="P01135-2"/>
</dbReference>
<dbReference type="PIR" id="JN0876">
    <property type="entry name" value="WFHU1"/>
</dbReference>
<dbReference type="RefSeq" id="NP_001093161.1">
    <molecule id="P01135-2"/>
    <property type="nucleotide sequence ID" value="NM_001099691.3"/>
</dbReference>
<dbReference type="RefSeq" id="NP_001295087.1">
    <property type="nucleotide sequence ID" value="NM_001308158.1"/>
</dbReference>
<dbReference type="RefSeq" id="NP_001295088.1">
    <property type="nucleotide sequence ID" value="NM_001308159.1"/>
</dbReference>
<dbReference type="RefSeq" id="NP_003227.1">
    <molecule id="P01135-1"/>
    <property type="nucleotide sequence ID" value="NM_003236.4"/>
</dbReference>
<dbReference type="PDB" id="1GK5">
    <property type="method" value="NMR"/>
    <property type="chains" value="A=83-89"/>
</dbReference>
<dbReference type="PDB" id="1MOX">
    <property type="method" value="X-ray"/>
    <property type="resolution" value="2.50 A"/>
    <property type="chains" value="C/D=40-89"/>
</dbReference>
<dbReference type="PDB" id="1YUF">
    <property type="method" value="NMR"/>
    <property type="chains" value="A=40-89"/>
</dbReference>
<dbReference type="PDB" id="1YUG">
    <property type="method" value="NMR"/>
    <property type="chains" value="A=40-89"/>
</dbReference>
<dbReference type="PDB" id="2TGF">
    <property type="method" value="NMR"/>
    <property type="chains" value="A=40-89"/>
</dbReference>
<dbReference type="PDB" id="3E50">
    <property type="method" value="X-ray"/>
    <property type="resolution" value="2.30 A"/>
    <property type="chains" value="C/D=40-89"/>
</dbReference>
<dbReference type="PDB" id="3TGF">
    <property type="method" value="NMR"/>
    <property type="chains" value="A=40-89"/>
</dbReference>
<dbReference type="PDB" id="4TGF">
    <property type="method" value="NMR"/>
    <property type="chains" value="A=40-89"/>
</dbReference>
<dbReference type="PDB" id="5KN5">
    <property type="method" value="X-ray"/>
    <property type="resolution" value="2.80 A"/>
    <property type="chains" value="C/F=49-88"/>
</dbReference>
<dbReference type="PDB" id="7SZ5">
    <property type="method" value="EM"/>
    <property type="resolution" value="3.60 A"/>
    <property type="chains" value="C/D=40-89"/>
</dbReference>
<dbReference type="PDB" id="7SZ7">
    <property type="method" value="EM"/>
    <property type="resolution" value="3.40 A"/>
    <property type="chains" value="C/D=40-89"/>
</dbReference>
<dbReference type="PDBsum" id="1GK5"/>
<dbReference type="PDBsum" id="1MOX"/>
<dbReference type="PDBsum" id="1YUF"/>
<dbReference type="PDBsum" id="1YUG"/>
<dbReference type="PDBsum" id="2TGF"/>
<dbReference type="PDBsum" id="3E50"/>
<dbReference type="PDBsum" id="3TGF"/>
<dbReference type="PDBsum" id="4TGF"/>
<dbReference type="PDBsum" id="5KN5"/>
<dbReference type="PDBsum" id="7SZ5"/>
<dbReference type="PDBsum" id="7SZ7"/>
<dbReference type="BMRB" id="P01135"/>
<dbReference type="EMDB" id="EMD-25561"/>
<dbReference type="EMDB" id="EMD-25563"/>
<dbReference type="SMR" id="P01135"/>
<dbReference type="BioGRID" id="112897">
    <property type="interactions" value="83"/>
</dbReference>
<dbReference type="DIP" id="DIP-5765N"/>
<dbReference type="FunCoup" id="P01135">
    <property type="interactions" value="849"/>
</dbReference>
<dbReference type="IntAct" id="P01135">
    <property type="interactions" value="77"/>
</dbReference>
<dbReference type="MINT" id="P01135"/>
<dbReference type="STRING" id="9606.ENSP00000404131"/>
<dbReference type="ChEMBL" id="CHEMBL4662938"/>
<dbReference type="GlyCosmos" id="P01135">
    <property type="glycosylation" value="1 site, No reported glycans"/>
</dbReference>
<dbReference type="GlyGen" id="P01135">
    <property type="glycosylation" value="1 site"/>
</dbReference>
<dbReference type="SwissPalm" id="P01135"/>
<dbReference type="BioMuta" id="TGFA"/>
<dbReference type="DMDM" id="135689"/>
<dbReference type="jPOST" id="P01135"/>
<dbReference type="MassIVE" id="P01135"/>
<dbReference type="PaxDb" id="9606-ENSP00000295400"/>
<dbReference type="PeptideAtlas" id="P01135"/>
<dbReference type="ProteomicsDB" id="51332">
    <molecule id="P01135-1"/>
</dbReference>
<dbReference type="ProteomicsDB" id="51333">
    <molecule id="P01135-2"/>
</dbReference>
<dbReference type="ProteomicsDB" id="51334">
    <molecule id="P01135-3"/>
</dbReference>
<dbReference type="ProteomicsDB" id="51335">
    <molecule id="P01135-4"/>
</dbReference>
<dbReference type="ProteomicsDB" id="51336">
    <molecule id="P01135-5"/>
</dbReference>
<dbReference type="ABCD" id="P01135">
    <property type="antibodies" value="10 sequenced antibodies"/>
</dbReference>
<dbReference type="Antibodypedia" id="16331">
    <property type="antibodies" value="1413 antibodies from 39 providers"/>
</dbReference>
<dbReference type="DNASU" id="7039"/>
<dbReference type="Ensembl" id="ENST00000295400.11">
    <molecule id="P01135-1"/>
    <property type="protein sequence ID" value="ENSP00000295400.6"/>
    <property type="gene ID" value="ENSG00000163235.16"/>
</dbReference>
<dbReference type="Ensembl" id="ENST00000418333.6">
    <molecule id="P01135-2"/>
    <property type="protein sequence ID" value="ENSP00000404099.2"/>
    <property type="gene ID" value="ENSG00000163235.16"/>
</dbReference>
<dbReference type="Ensembl" id="ENST00000445399.5">
    <molecule id="P01135-3"/>
    <property type="protein sequence ID" value="ENSP00000387493.1"/>
    <property type="gene ID" value="ENSG00000163235.16"/>
</dbReference>
<dbReference type="GeneID" id="7039"/>
<dbReference type="KEGG" id="hsa:7039"/>
<dbReference type="MANE-Select" id="ENST00000295400.11">
    <property type="protein sequence ID" value="ENSP00000295400.6"/>
    <property type="RefSeq nucleotide sequence ID" value="NM_003236.4"/>
    <property type="RefSeq protein sequence ID" value="NP_003227.1"/>
</dbReference>
<dbReference type="UCSC" id="uc002sgs.4">
    <molecule id="P01135-1"/>
    <property type="organism name" value="human"/>
</dbReference>
<dbReference type="AGR" id="HGNC:11765"/>
<dbReference type="CTD" id="7039"/>
<dbReference type="DisGeNET" id="7039"/>
<dbReference type="GeneCards" id="TGFA"/>
<dbReference type="HGNC" id="HGNC:11765">
    <property type="gene designation" value="TGFA"/>
</dbReference>
<dbReference type="HPA" id="ENSG00000163235">
    <property type="expression patterns" value="Tissue enhanced (esophagus)"/>
</dbReference>
<dbReference type="MalaCards" id="TGFA"/>
<dbReference type="MIM" id="190170">
    <property type="type" value="gene"/>
</dbReference>
<dbReference type="neXtProt" id="NX_P01135"/>
<dbReference type="OpenTargets" id="ENSG00000163235"/>
<dbReference type="Orphanet" id="99798">
    <property type="disease" value="Oligodontia"/>
</dbReference>
<dbReference type="PharmGKB" id="PA36480"/>
<dbReference type="VEuPathDB" id="HostDB:ENSG00000163235"/>
<dbReference type="eggNOG" id="ENOG502S1CF">
    <property type="taxonomic scope" value="Eukaryota"/>
</dbReference>
<dbReference type="GeneTree" id="ENSGT00940000160058"/>
<dbReference type="HOGENOM" id="CLU_109645_1_0_1"/>
<dbReference type="InParanoid" id="P01135"/>
<dbReference type="OMA" id="HSGYIGA"/>
<dbReference type="OrthoDB" id="9946464at2759"/>
<dbReference type="PAN-GO" id="P01135">
    <property type="GO annotations" value="7 GO annotations based on evolutionary models"/>
</dbReference>
<dbReference type="PhylomeDB" id="P01135"/>
<dbReference type="TreeFam" id="TF332938"/>
<dbReference type="PathwayCommons" id="P01135"/>
<dbReference type="Reactome" id="R-HSA-1257604">
    <property type="pathway name" value="PIP3 activates AKT signaling"/>
</dbReference>
<dbReference type="Reactome" id="R-HSA-177929">
    <property type="pathway name" value="Signaling by EGFR"/>
</dbReference>
<dbReference type="Reactome" id="R-HSA-179812">
    <property type="pathway name" value="GRB2 events in EGFR signaling"/>
</dbReference>
<dbReference type="Reactome" id="R-HSA-180292">
    <property type="pathway name" value="GAB1 signalosome"/>
</dbReference>
<dbReference type="Reactome" id="R-HSA-180336">
    <property type="pathway name" value="SHC1 events in EGFR signaling"/>
</dbReference>
<dbReference type="Reactome" id="R-HSA-182971">
    <property type="pathway name" value="EGFR downregulation"/>
</dbReference>
<dbReference type="Reactome" id="R-HSA-204005">
    <property type="pathway name" value="COPII-mediated vesicle transport"/>
</dbReference>
<dbReference type="Reactome" id="R-HSA-212718">
    <property type="pathway name" value="EGFR interacts with phospholipase C-gamma"/>
</dbReference>
<dbReference type="Reactome" id="R-HSA-2219530">
    <property type="pathway name" value="Constitutive Signaling by Aberrant PI3K in Cancer"/>
</dbReference>
<dbReference type="Reactome" id="R-HSA-5638303">
    <property type="pathway name" value="Inhibition of Signaling by Overexpressed EGFR"/>
</dbReference>
<dbReference type="Reactome" id="R-HSA-5673001">
    <property type="pathway name" value="RAF/MAP kinase cascade"/>
</dbReference>
<dbReference type="Reactome" id="R-HSA-5694530">
    <property type="pathway name" value="Cargo concentration in the ER"/>
</dbReference>
<dbReference type="Reactome" id="R-HSA-6811558">
    <property type="pathway name" value="PI5P, PP2A and IER3 Regulate PI3K/AKT Signaling"/>
</dbReference>
<dbReference type="Reactome" id="R-HSA-8856825">
    <property type="pathway name" value="Cargo recognition for clathrin-mediated endocytosis"/>
</dbReference>
<dbReference type="Reactome" id="R-HSA-8856828">
    <property type="pathway name" value="Clathrin-mediated endocytosis"/>
</dbReference>
<dbReference type="Reactome" id="R-HSA-8866910">
    <property type="pathway name" value="TFAP2 (AP-2) family regulates transcription of growth factors and their receptors"/>
</dbReference>
<dbReference type="Reactome" id="R-HSA-9009391">
    <property type="pathway name" value="Extra-nuclear estrogen signaling"/>
</dbReference>
<dbReference type="Reactome" id="R-HSA-9018519">
    <property type="pathway name" value="Estrogen-dependent gene expression"/>
</dbReference>
<dbReference type="Reactome" id="R-HSA-9634638">
    <property type="pathway name" value="Estrogen-dependent nuclear events downstream of ESR-membrane signaling"/>
</dbReference>
<dbReference type="SignaLink" id="P01135"/>
<dbReference type="SIGNOR" id="P01135"/>
<dbReference type="BioGRID-ORCS" id="7039">
    <property type="hits" value="6 hits in 1159 CRISPR screens"/>
</dbReference>
<dbReference type="ChiTaRS" id="TGFA">
    <property type="organism name" value="human"/>
</dbReference>
<dbReference type="EvolutionaryTrace" id="P01135"/>
<dbReference type="GeneWiki" id="TGF_alpha"/>
<dbReference type="GenomeRNAi" id="7039"/>
<dbReference type="Pharos" id="P01135">
    <property type="development level" value="Tbio"/>
</dbReference>
<dbReference type="PRO" id="PR:P01135"/>
<dbReference type="Proteomes" id="UP000005640">
    <property type="component" value="Chromosome 2"/>
</dbReference>
<dbReference type="RNAct" id="P01135">
    <property type="molecule type" value="protein"/>
</dbReference>
<dbReference type="Bgee" id="ENSG00000163235">
    <property type="expression patterns" value="Expressed in esophagus squamous epithelium and 176 other cell types or tissues"/>
</dbReference>
<dbReference type="ExpressionAtlas" id="P01135">
    <property type="expression patterns" value="baseline and differential"/>
</dbReference>
<dbReference type="GO" id="GO:0016323">
    <property type="term" value="C:basolateral plasma membrane"/>
    <property type="evidence" value="ECO:0000314"/>
    <property type="project" value="BHF-UCL"/>
</dbReference>
<dbReference type="GO" id="GO:0009986">
    <property type="term" value="C:cell surface"/>
    <property type="evidence" value="ECO:0000314"/>
    <property type="project" value="BHF-UCL"/>
</dbReference>
<dbReference type="GO" id="GO:0030669">
    <property type="term" value="C:clathrin-coated endocytic vesicle membrane"/>
    <property type="evidence" value="ECO:0000304"/>
    <property type="project" value="Reactome"/>
</dbReference>
<dbReference type="GO" id="GO:0031410">
    <property type="term" value="C:cytoplasmic vesicle"/>
    <property type="evidence" value="ECO:0000314"/>
    <property type="project" value="BHF-UCL"/>
</dbReference>
<dbReference type="GO" id="GO:0005789">
    <property type="term" value="C:endoplasmic reticulum membrane"/>
    <property type="evidence" value="ECO:0000304"/>
    <property type="project" value="Reactome"/>
</dbReference>
<dbReference type="GO" id="GO:0033116">
    <property type="term" value="C:endoplasmic reticulum-Golgi intermediate compartment membrane"/>
    <property type="evidence" value="ECO:0000304"/>
    <property type="project" value="Reactome"/>
</dbReference>
<dbReference type="GO" id="GO:0012507">
    <property type="term" value="C:ER to Golgi transport vesicle membrane"/>
    <property type="evidence" value="ECO:0000304"/>
    <property type="project" value="Reactome"/>
</dbReference>
<dbReference type="GO" id="GO:0005576">
    <property type="term" value="C:extracellular region"/>
    <property type="evidence" value="ECO:0000304"/>
    <property type="project" value="Reactome"/>
</dbReference>
<dbReference type="GO" id="GO:0005615">
    <property type="term" value="C:extracellular space"/>
    <property type="evidence" value="ECO:0000314"/>
    <property type="project" value="BHF-UCL"/>
</dbReference>
<dbReference type="GO" id="GO:0048471">
    <property type="term" value="C:perinuclear region of cytoplasm"/>
    <property type="evidence" value="ECO:0000314"/>
    <property type="project" value="BHF-UCL"/>
</dbReference>
<dbReference type="GO" id="GO:0005886">
    <property type="term" value="C:plasma membrane"/>
    <property type="evidence" value="ECO:0000303"/>
    <property type="project" value="ProtInc"/>
</dbReference>
<dbReference type="GO" id="GO:0005154">
    <property type="term" value="F:epidermal growth factor receptor binding"/>
    <property type="evidence" value="ECO:0000314"/>
    <property type="project" value="UniProtKB"/>
</dbReference>
<dbReference type="GO" id="GO:0008083">
    <property type="term" value="F:growth factor activity"/>
    <property type="evidence" value="ECO:0000314"/>
    <property type="project" value="HGNC-UCL"/>
</dbReference>
<dbReference type="GO" id="GO:0048018">
    <property type="term" value="F:receptor ligand activity"/>
    <property type="evidence" value="ECO:0000314"/>
    <property type="project" value="MGI"/>
</dbReference>
<dbReference type="GO" id="GO:0030297">
    <property type="term" value="F:transmembrane receptor protein tyrosine kinase activator activity"/>
    <property type="evidence" value="ECO:0007669"/>
    <property type="project" value="Ensembl"/>
</dbReference>
<dbReference type="GO" id="GO:0001525">
    <property type="term" value="P:angiogenesis"/>
    <property type="evidence" value="ECO:0007669"/>
    <property type="project" value="Ensembl"/>
</dbReference>
<dbReference type="GO" id="GO:0007166">
    <property type="term" value="P:cell surface receptor signaling pathway"/>
    <property type="evidence" value="ECO:0000314"/>
    <property type="project" value="HGNC-UCL"/>
</dbReference>
<dbReference type="GO" id="GO:0007173">
    <property type="term" value="P:epidermal growth factor receptor signaling pathway"/>
    <property type="evidence" value="ECO:0000314"/>
    <property type="project" value="MGI"/>
</dbReference>
<dbReference type="GO" id="GO:0038134">
    <property type="term" value="P:ERBB2-EGFR signaling pathway"/>
    <property type="evidence" value="ECO:0000314"/>
    <property type="project" value="MGI"/>
</dbReference>
<dbReference type="GO" id="GO:0072574">
    <property type="term" value="P:hepatocyte proliferation"/>
    <property type="evidence" value="ECO:0007669"/>
    <property type="project" value="Ensembl"/>
</dbReference>
<dbReference type="GO" id="GO:0035556">
    <property type="term" value="P:intracellular signal transduction"/>
    <property type="evidence" value="ECO:0000304"/>
    <property type="project" value="GO_Central"/>
</dbReference>
<dbReference type="GO" id="GO:0060749">
    <property type="term" value="P:mammary gland alveolus development"/>
    <property type="evidence" value="ECO:0007669"/>
    <property type="project" value="Ensembl"/>
</dbReference>
<dbReference type="GO" id="GO:0051781">
    <property type="term" value="P:positive regulation of cell division"/>
    <property type="evidence" value="ECO:0007669"/>
    <property type="project" value="UniProtKB-KW"/>
</dbReference>
<dbReference type="GO" id="GO:0008284">
    <property type="term" value="P:positive regulation of cell population proliferation"/>
    <property type="evidence" value="ECO:0000318"/>
    <property type="project" value="GO_Central"/>
</dbReference>
<dbReference type="GO" id="GO:0050679">
    <property type="term" value="P:positive regulation of epithelial cell proliferation"/>
    <property type="evidence" value="ECO:0000314"/>
    <property type="project" value="HGNC-UCL"/>
</dbReference>
<dbReference type="GO" id="GO:0043410">
    <property type="term" value="P:positive regulation of MAPK cascade"/>
    <property type="evidence" value="ECO:0000314"/>
    <property type="project" value="HGNC-UCL"/>
</dbReference>
<dbReference type="GO" id="GO:0045840">
    <property type="term" value="P:positive regulation of mitotic nuclear division"/>
    <property type="evidence" value="ECO:0000318"/>
    <property type="project" value="GO_Central"/>
</dbReference>
<dbReference type="FunFam" id="2.10.25.10:FF:000182">
    <property type="entry name" value="Protransforming growth factor alpha"/>
    <property type="match status" value="1"/>
</dbReference>
<dbReference type="Gene3D" id="2.10.25.10">
    <property type="entry name" value="Laminin"/>
    <property type="match status" value="1"/>
</dbReference>
<dbReference type="IDEAL" id="IID00290"/>
<dbReference type="InterPro" id="IPR000742">
    <property type="entry name" value="EGF-like_dom"/>
</dbReference>
<dbReference type="PANTHER" id="PTHR10740:SF1">
    <property type="entry name" value="PROTRANSFORMING GROWTH FACTOR ALPHA"/>
    <property type="match status" value="1"/>
</dbReference>
<dbReference type="PANTHER" id="PTHR10740">
    <property type="entry name" value="TRANSFORMING GROWTH FACTOR ALPHA"/>
    <property type="match status" value="1"/>
</dbReference>
<dbReference type="PRINTS" id="PR00009">
    <property type="entry name" value="EGFTGF"/>
</dbReference>
<dbReference type="SUPFAM" id="SSF57196">
    <property type="entry name" value="EGF/Laminin"/>
    <property type="match status" value="1"/>
</dbReference>
<dbReference type="PROSITE" id="PS00022">
    <property type="entry name" value="EGF_1"/>
    <property type="match status" value="1"/>
</dbReference>
<dbReference type="PROSITE" id="PS01186">
    <property type="entry name" value="EGF_2"/>
    <property type="match status" value="1"/>
</dbReference>
<dbReference type="PROSITE" id="PS50026">
    <property type="entry name" value="EGF_3"/>
    <property type="match status" value="1"/>
</dbReference>